<sequence length="235" mass="25016">MLTLLAILAVSYIIGSIPTSLVAGKLLKGIDIRNFGSGNAGGTNAFRVLGWKPGLVVTLIDIVKGVVAAVSVVAFFRHHPIGAFPDMNEVALRLLAGMSAVIGHVFTLFAGFKGGKGVSTAAGMLIGIAPVSMLMVVGIFLLTVYISRHVSVASMLAAIAFPLIIAIRKYIFELGSGLDYYIGLFGSPISFHDSLDYHLMIFGLIVALAILYTHRTNIRRLISGTESRVTFGKKH</sequence>
<reference key="1">
    <citation type="submission" date="2008-06" db="EMBL/GenBank/DDBJ databases">
        <title>Complete sequence of Pelodictyon phaeoclathratiforme BU-1.</title>
        <authorList>
            <consortium name="US DOE Joint Genome Institute"/>
            <person name="Lucas S."/>
            <person name="Copeland A."/>
            <person name="Lapidus A."/>
            <person name="Glavina del Rio T."/>
            <person name="Dalin E."/>
            <person name="Tice H."/>
            <person name="Bruce D."/>
            <person name="Goodwin L."/>
            <person name="Pitluck S."/>
            <person name="Schmutz J."/>
            <person name="Larimer F."/>
            <person name="Land M."/>
            <person name="Hauser L."/>
            <person name="Kyrpides N."/>
            <person name="Mikhailova N."/>
            <person name="Liu Z."/>
            <person name="Li T."/>
            <person name="Zhao F."/>
            <person name="Overmann J."/>
            <person name="Bryant D.A."/>
            <person name="Richardson P."/>
        </authorList>
    </citation>
    <scope>NUCLEOTIDE SEQUENCE [LARGE SCALE GENOMIC DNA]</scope>
    <source>
        <strain>DSM 5477 / BU-1</strain>
    </source>
</reference>
<organism>
    <name type="scientific">Pelodictyon phaeoclathratiforme (strain DSM 5477 / BU-1)</name>
    <dbReference type="NCBI Taxonomy" id="324925"/>
    <lineage>
        <taxon>Bacteria</taxon>
        <taxon>Pseudomonadati</taxon>
        <taxon>Chlorobiota</taxon>
        <taxon>Chlorobiia</taxon>
        <taxon>Chlorobiales</taxon>
        <taxon>Chlorobiaceae</taxon>
        <taxon>Chlorobium/Pelodictyon group</taxon>
        <taxon>Pelodictyon</taxon>
    </lineage>
</organism>
<dbReference type="EC" id="2.3.1.275" evidence="1"/>
<dbReference type="EMBL" id="CP001110">
    <property type="protein sequence ID" value="ACF44965.1"/>
    <property type="molecule type" value="Genomic_DNA"/>
</dbReference>
<dbReference type="RefSeq" id="WP_012509433.1">
    <property type="nucleotide sequence ID" value="NC_011060.1"/>
</dbReference>
<dbReference type="SMR" id="B4SGX7"/>
<dbReference type="STRING" id="324925.Ppha_2816"/>
<dbReference type="KEGG" id="pph:Ppha_2816"/>
<dbReference type="eggNOG" id="COG0344">
    <property type="taxonomic scope" value="Bacteria"/>
</dbReference>
<dbReference type="HOGENOM" id="CLU_081254_3_0_10"/>
<dbReference type="OrthoDB" id="9777124at2"/>
<dbReference type="UniPathway" id="UPA00085"/>
<dbReference type="Proteomes" id="UP000002724">
    <property type="component" value="Chromosome"/>
</dbReference>
<dbReference type="GO" id="GO:0005886">
    <property type="term" value="C:plasma membrane"/>
    <property type="evidence" value="ECO:0007669"/>
    <property type="project" value="UniProtKB-SubCell"/>
</dbReference>
<dbReference type="GO" id="GO:0043772">
    <property type="term" value="F:acyl-phosphate glycerol-3-phosphate acyltransferase activity"/>
    <property type="evidence" value="ECO:0007669"/>
    <property type="project" value="UniProtKB-UniRule"/>
</dbReference>
<dbReference type="GO" id="GO:0008654">
    <property type="term" value="P:phospholipid biosynthetic process"/>
    <property type="evidence" value="ECO:0007669"/>
    <property type="project" value="UniProtKB-UniRule"/>
</dbReference>
<dbReference type="HAMAP" id="MF_01043">
    <property type="entry name" value="PlsY"/>
    <property type="match status" value="1"/>
</dbReference>
<dbReference type="InterPro" id="IPR003811">
    <property type="entry name" value="G3P_acylTferase_PlsY"/>
</dbReference>
<dbReference type="NCBIfam" id="TIGR00023">
    <property type="entry name" value="glycerol-3-phosphate 1-O-acyltransferase PlsY"/>
    <property type="match status" value="1"/>
</dbReference>
<dbReference type="PANTHER" id="PTHR30309:SF0">
    <property type="entry name" value="GLYCEROL-3-PHOSPHATE ACYLTRANSFERASE-RELATED"/>
    <property type="match status" value="1"/>
</dbReference>
<dbReference type="PANTHER" id="PTHR30309">
    <property type="entry name" value="INNER MEMBRANE PROTEIN YGIH"/>
    <property type="match status" value="1"/>
</dbReference>
<dbReference type="Pfam" id="PF02660">
    <property type="entry name" value="G3P_acyltransf"/>
    <property type="match status" value="1"/>
</dbReference>
<dbReference type="SMART" id="SM01207">
    <property type="entry name" value="G3P_acyltransf"/>
    <property type="match status" value="1"/>
</dbReference>
<protein>
    <recommendedName>
        <fullName evidence="1">Glycerol-3-phosphate acyltransferase</fullName>
    </recommendedName>
    <alternativeName>
        <fullName evidence="1">Acyl-PO4 G3P acyltransferase</fullName>
    </alternativeName>
    <alternativeName>
        <fullName evidence="1">Acyl-phosphate--glycerol-3-phosphate acyltransferase</fullName>
    </alternativeName>
    <alternativeName>
        <fullName evidence="1">G3P acyltransferase</fullName>
        <shortName evidence="1">GPAT</shortName>
        <ecNumber evidence="1">2.3.1.275</ecNumber>
    </alternativeName>
    <alternativeName>
        <fullName evidence="1">Lysophosphatidic acid synthase</fullName>
        <shortName evidence="1">LPA synthase</shortName>
    </alternativeName>
</protein>
<gene>
    <name evidence="1" type="primary">plsY</name>
    <name type="ordered locus">Ppha_2816</name>
</gene>
<comment type="function">
    <text evidence="1">Catalyzes the transfer of an acyl group from acyl-phosphate (acyl-PO(4)) to glycerol-3-phosphate (G3P) to form lysophosphatidic acid (LPA). This enzyme utilizes acyl-phosphate as fatty acyl donor, but not acyl-CoA or acyl-ACP.</text>
</comment>
<comment type="catalytic activity">
    <reaction evidence="1">
        <text>an acyl phosphate + sn-glycerol 3-phosphate = a 1-acyl-sn-glycero-3-phosphate + phosphate</text>
        <dbReference type="Rhea" id="RHEA:34075"/>
        <dbReference type="ChEBI" id="CHEBI:43474"/>
        <dbReference type="ChEBI" id="CHEBI:57597"/>
        <dbReference type="ChEBI" id="CHEBI:57970"/>
        <dbReference type="ChEBI" id="CHEBI:59918"/>
        <dbReference type="EC" id="2.3.1.275"/>
    </reaction>
</comment>
<comment type="pathway">
    <text evidence="1">Lipid metabolism; phospholipid metabolism.</text>
</comment>
<comment type="subunit">
    <text evidence="1">Probably interacts with PlsX.</text>
</comment>
<comment type="subcellular location">
    <subcellularLocation>
        <location evidence="1">Cell inner membrane</location>
        <topology evidence="1">Multi-pass membrane protein</topology>
    </subcellularLocation>
</comment>
<comment type="similarity">
    <text evidence="1">Belongs to the PlsY family.</text>
</comment>
<name>PLSY_PELPB</name>
<proteinExistence type="inferred from homology"/>
<keyword id="KW-0997">Cell inner membrane</keyword>
<keyword id="KW-1003">Cell membrane</keyword>
<keyword id="KW-0444">Lipid biosynthesis</keyword>
<keyword id="KW-0443">Lipid metabolism</keyword>
<keyword id="KW-0472">Membrane</keyword>
<keyword id="KW-0594">Phospholipid biosynthesis</keyword>
<keyword id="KW-1208">Phospholipid metabolism</keyword>
<keyword id="KW-1185">Reference proteome</keyword>
<keyword id="KW-0808">Transferase</keyword>
<keyword id="KW-0812">Transmembrane</keyword>
<keyword id="KW-1133">Transmembrane helix</keyword>
<feature type="chain" id="PRO_1000136104" description="Glycerol-3-phosphate acyltransferase">
    <location>
        <begin position="1"/>
        <end position="235"/>
    </location>
</feature>
<feature type="transmembrane region" description="Helical" evidence="1">
    <location>
        <begin position="4"/>
        <end position="24"/>
    </location>
</feature>
<feature type="transmembrane region" description="Helical" evidence="1">
    <location>
        <begin position="56"/>
        <end position="76"/>
    </location>
</feature>
<feature type="transmembrane region" description="Helical" evidence="1">
    <location>
        <begin position="94"/>
        <end position="114"/>
    </location>
</feature>
<feature type="transmembrane region" description="Helical" evidence="1">
    <location>
        <begin position="122"/>
        <end position="142"/>
    </location>
</feature>
<feature type="transmembrane region" description="Helical" evidence="1">
    <location>
        <begin position="152"/>
        <end position="172"/>
    </location>
</feature>
<feature type="transmembrane region" description="Helical" evidence="1">
    <location>
        <begin position="191"/>
        <end position="211"/>
    </location>
</feature>
<accession>B4SGX7</accession>
<evidence type="ECO:0000255" key="1">
    <source>
        <dbReference type="HAMAP-Rule" id="MF_01043"/>
    </source>
</evidence>